<evidence type="ECO:0000255" key="1">
    <source>
        <dbReference type="HAMAP-Rule" id="MF_01390"/>
    </source>
</evidence>
<comment type="function">
    <text evidence="1">Usually encoded in the trnK tRNA gene intron. Probably assists in splicing its own and other chloroplast group II introns.</text>
</comment>
<comment type="subcellular location">
    <subcellularLocation>
        <location>Plastid</location>
        <location>Chloroplast</location>
    </subcellularLocation>
</comment>
<comment type="similarity">
    <text evidence="1">Belongs to the intron maturase 2 family. MatK subfamily.</text>
</comment>
<protein>
    <recommendedName>
        <fullName evidence="1">Maturase K</fullName>
    </recommendedName>
    <alternativeName>
        <fullName evidence="1">Intron maturase</fullName>
    </alternativeName>
</protein>
<organism>
    <name type="scientific">Paeonia lactiflora</name>
    <name type="common">Chinese peony</name>
    <name type="synonym">Paeonia albiflora</name>
    <dbReference type="NCBI Taxonomy" id="35924"/>
    <lineage>
        <taxon>Eukaryota</taxon>
        <taxon>Viridiplantae</taxon>
        <taxon>Streptophyta</taxon>
        <taxon>Embryophyta</taxon>
        <taxon>Tracheophyta</taxon>
        <taxon>Spermatophyta</taxon>
        <taxon>Magnoliopsida</taxon>
        <taxon>eudicotyledons</taxon>
        <taxon>Gunneridae</taxon>
        <taxon>Pentapetalae</taxon>
        <taxon>Saxifragales</taxon>
        <taxon>Paeoniaceae</taxon>
        <taxon>Paeonia</taxon>
    </lineage>
</organism>
<keyword id="KW-0150">Chloroplast</keyword>
<keyword id="KW-0507">mRNA processing</keyword>
<keyword id="KW-0934">Plastid</keyword>
<keyword id="KW-0694">RNA-binding</keyword>
<keyword id="KW-0819">tRNA processing</keyword>
<name>MATK_PAELC</name>
<geneLocation type="chloroplast"/>
<gene>
    <name evidence="1" type="primary">matK</name>
</gene>
<reference key="1">
    <citation type="journal article" date="1997" name="Am. J. Bot.">
        <title>Chloroplast DNA phylogeny, reticulate evolution, and biogeography of Paeonia (Paeoniaceae).</title>
        <authorList>
            <person name="Sang T."/>
            <person name="Crawford D.J."/>
            <person name="Stuessy T.F."/>
        </authorList>
    </citation>
    <scope>NUCLEOTIDE SEQUENCE [GENOMIC DNA]</scope>
</reference>
<proteinExistence type="inferred from homology"/>
<sequence>MEKSQGYLELDKSWRHGFLYPLIFQEYIYALAHEQGLNRSILLENTDHDNKYSSLIVKRLITLIHQQNHFLIFDNDSNQNPFWKHNNNLYSQTISEGFVIIVEIPFSPRFVDSLEEKKKILKSNNLRSIHSIFPFLEDQILHLNFVANILIPYPIHLEIVVQSLRYRVKDASSLHLLRFFLFTLNKSISSFSKRNQRFFLFLYNSHVYEYESTFLFLRNKTSHLRSTSSGAFLERIFFYGKIKHLIEVFANDFQAILWLFKDPFMHYVRYQGKSILASKRTSLRMNKWKYYLVNFWQCQFYVWSQPGRVSINQLSNHSLDFLGYLSSVRRNPLAVRSQMLENSFLTDNAIKKFDIIVLLISLIGSLAKAKFCNVLGHPLSKPARADSSDSDIIERFVRICRNLSHYHSGSSKKKSLYRIKYILRLSCARTLARKHKTTVRSFLKRLGSELLEEFLTEDGQVISLIFPRTSSTSWRLYRGGIWYLDITCINDLANHE</sequence>
<accession>O46996</accession>
<dbReference type="EMBL" id="AF033597">
    <property type="protein sequence ID" value="AAB92529.1"/>
    <property type="molecule type" value="Genomic_DNA"/>
</dbReference>
<dbReference type="GO" id="GO:0009507">
    <property type="term" value="C:chloroplast"/>
    <property type="evidence" value="ECO:0007669"/>
    <property type="project" value="UniProtKB-SubCell"/>
</dbReference>
<dbReference type="GO" id="GO:0003723">
    <property type="term" value="F:RNA binding"/>
    <property type="evidence" value="ECO:0007669"/>
    <property type="project" value="UniProtKB-KW"/>
</dbReference>
<dbReference type="GO" id="GO:0006397">
    <property type="term" value="P:mRNA processing"/>
    <property type="evidence" value="ECO:0007669"/>
    <property type="project" value="UniProtKB-KW"/>
</dbReference>
<dbReference type="GO" id="GO:0008380">
    <property type="term" value="P:RNA splicing"/>
    <property type="evidence" value="ECO:0007669"/>
    <property type="project" value="UniProtKB-UniRule"/>
</dbReference>
<dbReference type="GO" id="GO:0008033">
    <property type="term" value="P:tRNA processing"/>
    <property type="evidence" value="ECO:0007669"/>
    <property type="project" value="UniProtKB-KW"/>
</dbReference>
<dbReference type="HAMAP" id="MF_01390">
    <property type="entry name" value="MatK"/>
    <property type="match status" value="1"/>
</dbReference>
<dbReference type="InterPro" id="IPR024937">
    <property type="entry name" value="Domain_X"/>
</dbReference>
<dbReference type="InterPro" id="IPR002866">
    <property type="entry name" value="Maturase_MatK"/>
</dbReference>
<dbReference type="InterPro" id="IPR024942">
    <property type="entry name" value="Maturase_MatK_N"/>
</dbReference>
<dbReference type="PANTHER" id="PTHR34811">
    <property type="entry name" value="MATURASE K"/>
    <property type="match status" value="1"/>
</dbReference>
<dbReference type="PANTHER" id="PTHR34811:SF1">
    <property type="entry name" value="MATURASE K"/>
    <property type="match status" value="1"/>
</dbReference>
<dbReference type="Pfam" id="PF01348">
    <property type="entry name" value="Intron_maturas2"/>
    <property type="match status" value="1"/>
</dbReference>
<dbReference type="Pfam" id="PF01824">
    <property type="entry name" value="MatK_N"/>
    <property type="match status" value="1"/>
</dbReference>
<feature type="chain" id="PRO_0000143567" description="Maturase K">
    <location>
        <begin position="1"/>
        <end position="496"/>
    </location>
</feature>